<feature type="chain" id="PRO_0000227141" description="Anthranilate phosphoribosyltransferase">
    <location>
        <begin position="1"/>
        <end position="343"/>
    </location>
</feature>
<feature type="binding site" evidence="1">
    <location>
        <position position="84"/>
    </location>
    <ligand>
        <name>5-phospho-alpha-D-ribose 1-diphosphate</name>
        <dbReference type="ChEBI" id="CHEBI:58017"/>
    </ligand>
</feature>
<feature type="binding site" evidence="1">
    <location>
        <position position="84"/>
    </location>
    <ligand>
        <name>anthranilate</name>
        <dbReference type="ChEBI" id="CHEBI:16567"/>
        <label>1</label>
    </ligand>
</feature>
<feature type="binding site" evidence="1">
    <location>
        <begin position="87"/>
        <end position="88"/>
    </location>
    <ligand>
        <name>5-phospho-alpha-D-ribose 1-diphosphate</name>
        <dbReference type="ChEBI" id="CHEBI:58017"/>
    </ligand>
</feature>
<feature type="binding site" evidence="1">
    <location>
        <position position="92"/>
    </location>
    <ligand>
        <name>5-phospho-alpha-D-ribose 1-diphosphate</name>
        <dbReference type="ChEBI" id="CHEBI:58017"/>
    </ligand>
</feature>
<feature type="binding site" evidence="1">
    <location>
        <begin position="94"/>
        <end position="97"/>
    </location>
    <ligand>
        <name>5-phospho-alpha-D-ribose 1-diphosphate</name>
        <dbReference type="ChEBI" id="CHEBI:58017"/>
    </ligand>
</feature>
<feature type="binding site" evidence="1">
    <location>
        <position position="96"/>
    </location>
    <ligand>
        <name>Mg(2+)</name>
        <dbReference type="ChEBI" id="CHEBI:18420"/>
        <label>1</label>
    </ligand>
</feature>
<feature type="binding site" evidence="1">
    <location>
        <begin position="112"/>
        <end position="120"/>
    </location>
    <ligand>
        <name>5-phospho-alpha-D-ribose 1-diphosphate</name>
        <dbReference type="ChEBI" id="CHEBI:58017"/>
    </ligand>
</feature>
<feature type="binding site" evidence="1">
    <location>
        <position position="115"/>
    </location>
    <ligand>
        <name>anthranilate</name>
        <dbReference type="ChEBI" id="CHEBI:16567"/>
        <label>1</label>
    </ligand>
</feature>
<feature type="binding site" evidence="1">
    <location>
        <position position="124"/>
    </location>
    <ligand>
        <name>5-phospho-alpha-D-ribose 1-diphosphate</name>
        <dbReference type="ChEBI" id="CHEBI:58017"/>
    </ligand>
</feature>
<feature type="binding site" evidence="1">
    <location>
        <position position="170"/>
    </location>
    <ligand>
        <name>anthranilate</name>
        <dbReference type="ChEBI" id="CHEBI:16567"/>
        <label>2</label>
    </ligand>
</feature>
<feature type="binding site" evidence="1">
    <location>
        <position position="229"/>
    </location>
    <ligand>
        <name>Mg(2+)</name>
        <dbReference type="ChEBI" id="CHEBI:18420"/>
        <label>2</label>
    </ligand>
</feature>
<feature type="binding site" evidence="1">
    <location>
        <position position="230"/>
    </location>
    <ligand>
        <name>Mg(2+)</name>
        <dbReference type="ChEBI" id="CHEBI:18420"/>
        <label>1</label>
    </ligand>
</feature>
<feature type="binding site" evidence="1">
    <location>
        <position position="230"/>
    </location>
    <ligand>
        <name>Mg(2+)</name>
        <dbReference type="ChEBI" id="CHEBI:18420"/>
        <label>2</label>
    </ligand>
</feature>
<reference key="1">
    <citation type="journal article" date="2004" name="Proc. Natl. Acad. Sci. U.S.A.">
        <title>Structural flexibility in the Burkholderia mallei genome.</title>
        <authorList>
            <person name="Nierman W.C."/>
            <person name="DeShazer D."/>
            <person name="Kim H.S."/>
            <person name="Tettelin H."/>
            <person name="Nelson K.E."/>
            <person name="Feldblyum T.V."/>
            <person name="Ulrich R.L."/>
            <person name="Ronning C.M."/>
            <person name="Brinkac L.M."/>
            <person name="Daugherty S.C."/>
            <person name="Davidsen T.D."/>
            <person name="DeBoy R.T."/>
            <person name="Dimitrov G."/>
            <person name="Dodson R.J."/>
            <person name="Durkin A.S."/>
            <person name="Gwinn M.L."/>
            <person name="Haft D.H."/>
            <person name="Khouri H.M."/>
            <person name="Kolonay J.F."/>
            <person name="Madupu R."/>
            <person name="Mohammoud Y."/>
            <person name="Nelson W.C."/>
            <person name="Radune D."/>
            <person name="Romero C.M."/>
            <person name="Sarria S."/>
            <person name="Selengut J."/>
            <person name="Shamblin C."/>
            <person name="Sullivan S.A."/>
            <person name="White O."/>
            <person name="Yu Y."/>
            <person name="Zafar N."/>
            <person name="Zhou L."/>
            <person name="Fraser C.M."/>
        </authorList>
    </citation>
    <scope>NUCLEOTIDE SEQUENCE [LARGE SCALE GENOMIC DNA]</scope>
    <source>
        <strain>ATCC 23344</strain>
    </source>
</reference>
<accession>Q62DC9</accession>
<sequence length="343" mass="37017">MTITPQEALQRTIEHREIFHDEMLHLMRLIMRGDMSPVMAAAIITGLRVKKETIGEIAAAATVMREFARRVEVEDNANFVDIVGTGGDGSHTFNISTATMFVAAAAGAKVAKHGNRGVSSKSGSADVLEALGVNIDLQPEQVAASIAETGMGFMFAPNHHPAMRNIAPVRRELGVRTIFNILGPLTNPADAPNQLMGVFHPDLVGIQVRVMQRLGAQHVLVVYGKDGMDEVSLGAATLVGELRDGEVREYEIHPEDFGMQMVSNRTLKVESADESRVMLLEALGNKPGVAREIVTLNAGTALYSADVAGSIADGIQLARDAIASGRAREKVDELVRFTQQFKR</sequence>
<protein>
    <recommendedName>
        <fullName evidence="1">Anthranilate phosphoribosyltransferase</fullName>
        <ecNumber evidence="1">2.4.2.18</ecNumber>
    </recommendedName>
</protein>
<proteinExistence type="inferred from homology"/>
<name>TRPD_BURMA</name>
<evidence type="ECO:0000255" key="1">
    <source>
        <dbReference type="HAMAP-Rule" id="MF_00211"/>
    </source>
</evidence>
<comment type="function">
    <text evidence="1">Catalyzes the transfer of the phosphoribosyl group of 5-phosphorylribose-1-pyrophosphate (PRPP) to anthranilate to yield N-(5'-phosphoribosyl)-anthranilate (PRA).</text>
</comment>
<comment type="catalytic activity">
    <reaction evidence="1">
        <text>N-(5-phospho-beta-D-ribosyl)anthranilate + diphosphate = 5-phospho-alpha-D-ribose 1-diphosphate + anthranilate</text>
        <dbReference type="Rhea" id="RHEA:11768"/>
        <dbReference type="ChEBI" id="CHEBI:16567"/>
        <dbReference type="ChEBI" id="CHEBI:18277"/>
        <dbReference type="ChEBI" id="CHEBI:33019"/>
        <dbReference type="ChEBI" id="CHEBI:58017"/>
        <dbReference type="EC" id="2.4.2.18"/>
    </reaction>
</comment>
<comment type="cofactor">
    <cofactor evidence="1">
        <name>Mg(2+)</name>
        <dbReference type="ChEBI" id="CHEBI:18420"/>
    </cofactor>
    <text evidence="1">Binds 2 magnesium ions per monomer.</text>
</comment>
<comment type="pathway">
    <text evidence="1">Amino-acid biosynthesis; L-tryptophan biosynthesis; L-tryptophan from chorismate: step 2/5.</text>
</comment>
<comment type="subunit">
    <text evidence="1">Homodimer.</text>
</comment>
<comment type="similarity">
    <text evidence="1">Belongs to the anthranilate phosphoribosyltransferase family.</text>
</comment>
<keyword id="KW-0028">Amino-acid biosynthesis</keyword>
<keyword id="KW-0057">Aromatic amino acid biosynthesis</keyword>
<keyword id="KW-0328">Glycosyltransferase</keyword>
<keyword id="KW-0460">Magnesium</keyword>
<keyword id="KW-0479">Metal-binding</keyword>
<keyword id="KW-1185">Reference proteome</keyword>
<keyword id="KW-0808">Transferase</keyword>
<keyword id="KW-0822">Tryptophan biosynthesis</keyword>
<organism>
    <name type="scientific">Burkholderia mallei (strain ATCC 23344)</name>
    <dbReference type="NCBI Taxonomy" id="243160"/>
    <lineage>
        <taxon>Bacteria</taxon>
        <taxon>Pseudomonadati</taxon>
        <taxon>Pseudomonadota</taxon>
        <taxon>Betaproteobacteria</taxon>
        <taxon>Burkholderiales</taxon>
        <taxon>Burkholderiaceae</taxon>
        <taxon>Burkholderia</taxon>
        <taxon>pseudomallei group</taxon>
    </lineage>
</organism>
<gene>
    <name evidence="1" type="primary">trpD</name>
    <name type="ordered locus">BMAA0531</name>
</gene>
<dbReference type="EC" id="2.4.2.18" evidence="1"/>
<dbReference type="EMBL" id="CP000011">
    <property type="protein sequence ID" value="AAU46884.1"/>
    <property type="molecule type" value="Genomic_DNA"/>
</dbReference>
<dbReference type="RefSeq" id="WP_004186823.1">
    <property type="nucleotide sequence ID" value="NC_006349.2"/>
</dbReference>
<dbReference type="RefSeq" id="YP_105299.1">
    <property type="nucleotide sequence ID" value="NC_006349.2"/>
</dbReference>
<dbReference type="SMR" id="Q62DC9"/>
<dbReference type="GeneID" id="93061660"/>
<dbReference type="KEGG" id="bma:BMAA0531"/>
<dbReference type="PATRIC" id="fig|243160.12.peg.4041"/>
<dbReference type="eggNOG" id="COG0547">
    <property type="taxonomic scope" value="Bacteria"/>
</dbReference>
<dbReference type="HOGENOM" id="CLU_034315_2_1_4"/>
<dbReference type="UniPathway" id="UPA00035">
    <property type="reaction ID" value="UER00041"/>
</dbReference>
<dbReference type="Proteomes" id="UP000006693">
    <property type="component" value="Chromosome 2"/>
</dbReference>
<dbReference type="GO" id="GO:0005829">
    <property type="term" value="C:cytosol"/>
    <property type="evidence" value="ECO:0007669"/>
    <property type="project" value="TreeGrafter"/>
</dbReference>
<dbReference type="GO" id="GO:0004048">
    <property type="term" value="F:anthranilate phosphoribosyltransferase activity"/>
    <property type="evidence" value="ECO:0007669"/>
    <property type="project" value="UniProtKB-UniRule"/>
</dbReference>
<dbReference type="GO" id="GO:0000287">
    <property type="term" value="F:magnesium ion binding"/>
    <property type="evidence" value="ECO:0007669"/>
    <property type="project" value="UniProtKB-UniRule"/>
</dbReference>
<dbReference type="GO" id="GO:0000162">
    <property type="term" value="P:L-tryptophan biosynthetic process"/>
    <property type="evidence" value="ECO:0007669"/>
    <property type="project" value="UniProtKB-UniRule"/>
</dbReference>
<dbReference type="FunFam" id="1.20.970.10:FF:000006">
    <property type="entry name" value="Anthranilate phosphoribosyltransferase"/>
    <property type="match status" value="1"/>
</dbReference>
<dbReference type="FunFam" id="3.40.1030.10:FF:000002">
    <property type="entry name" value="Anthranilate phosphoribosyltransferase"/>
    <property type="match status" value="1"/>
</dbReference>
<dbReference type="Gene3D" id="3.40.1030.10">
    <property type="entry name" value="Nucleoside phosphorylase/phosphoribosyltransferase catalytic domain"/>
    <property type="match status" value="1"/>
</dbReference>
<dbReference type="Gene3D" id="1.20.970.10">
    <property type="entry name" value="Transferase, Pyrimidine Nucleoside Phosphorylase, Chain C"/>
    <property type="match status" value="1"/>
</dbReference>
<dbReference type="HAMAP" id="MF_00211">
    <property type="entry name" value="TrpD"/>
    <property type="match status" value="1"/>
</dbReference>
<dbReference type="InterPro" id="IPR005940">
    <property type="entry name" value="Anthranilate_Pribosyl_Tfrase"/>
</dbReference>
<dbReference type="InterPro" id="IPR000312">
    <property type="entry name" value="Glycosyl_Trfase_fam3"/>
</dbReference>
<dbReference type="InterPro" id="IPR017459">
    <property type="entry name" value="Glycosyl_Trfase_fam3_N_dom"/>
</dbReference>
<dbReference type="InterPro" id="IPR036320">
    <property type="entry name" value="Glycosyl_Trfase_fam3_N_dom_sf"/>
</dbReference>
<dbReference type="InterPro" id="IPR035902">
    <property type="entry name" value="Nuc_phospho_transferase"/>
</dbReference>
<dbReference type="NCBIfam" id="TIGR01245">
    <property type="entry name" value="trpD"/>
    <property type="match status" value="1"/>
</dbReference>
<dbReference type="PANTHER" id="PTHR43285">
    <property type="entry name" value="ANTHRANILATE PHOSPHORIBOSYLTRANSFERASE"/>
    <property type="match status" value="1"/>
</dbReference>
<dbReference type="PANTHER" id="PTHR43285:SF2">
    <property type="entry name" value="ANTHRANILATE PHOSPHORIBOSYLTRANSFERASE"/>
    <property type="match status" value="1"/>
</dbReference>
<dbReference type="Pfam" id="PF02885">
    <property type="entry name" value="Glycos_trans_3N"/>
    <property type="match status" value="1"/>
</dbReference>
<dbReference type="Pfam" id="PF00591">
    <property type="entry name" value="Glycos_transf_3"/>
    <property type="match status" value="1"/>
</dbReference>
<dbReference type="SUPFAM" id="SSF52418">
    <property type="entry name" value="Nucleoside phosphorylase/phosphoribosyltransferase catalytic domain"/>
    <property type="match status" value="1"/>
</dbReference>
<dbReference type="SUPFAM" id="SSF47648">
    <property type="entry name" value="Nucleoside phosphorylase/phosphoribosyltransferase N-terminal domain"/>
    <property type="match status" value="1"/>
</dbReference>